<feature type="chain" id="PRO_0000194590" description="Urease operon transcriptional activator">
    <location>
        <begin position="1"/>
        <end position="296"/>
    </location>
</feature>
<feature type="domain" description="HTH araC/xylS-type" evidence="1">
    <location>
        <begin position="171"/>
        <end position="268"/>
    </location>
</feature>
<feature type="DNA-binding region" description="H-T-H motif" evidence="1">
    <location>
        <begin position="188"/>
        <end position="209"/>
    </location>
</feature>
<feature type="DNA-binding region" description="H-T-H motif" evidence="1">
    <location>
        <begin position="235"/>
        <end position="258"/>
    </location>
</feature>
<organism>
    <name type="scientific">Escherichia coli</name>
    <dbReference type="NCBI Taxonomy" id="562"/>
    <lineage>
        <taxon>Bacteria</taxon>
        <taxon>Pseudomonadati</taxon>
        <taxon>Pseudomonadota</taxon>
        <taxon>Gammaproteobacteria</taxon>
        <taxon>Enterobacterales</taxon>
        <taxon>Enterobacteriaceae</taxon>
        <taxon>Escherichia</taxon>
    </lineage>
</organism>
<evidence type="ECO:0000255" key="1">
    <source>
        <dbReference type="PROSITE-ProRule" id="PRU00593"/>
    </source>
</evidence>
<geneLocation type="plasmid"/>
<keyword id="KW-0010">Activator</keyword>
<keyword id="KW-0238">DNA-binding</keyword>
<keyword id="KW-0614">Plasmid</keyword>
<keyword id="KW-0804">Transcription</keyword>
<keyword id="KW-0805">Transcription regulation</keyword>
<reference key="1">
    <citation type="journal article" date="1993" name="J. Bacteriol.">
        <title>The plasmid-encoded urease gene cluster of the family Enterobacteriaceae is positively regulated by UreR, a member of the AraC family of transcriptional activators.</title>
        <authorList>
            <person name="D'Orazio S.E.F."/>
            <person name="Collins C.M."/>
        </authorList>
    </citation>
    <scope>NUCLEOTIDE SEQUENCE [GENOMIC DNA]</scope>
</reference>
<name>URER_ECOLX</name>
<protein>
    <recommendedName>
        <fullName>Urease operon transcriptional activator</fullName>
    </recommendedName>
</protein>
<sequence length="296" mass="34032">MEYKFFLSESQMVLKAFYIESAMIAMLTGAKGNIVINGQSIEIESDVTLIIPKYSQVSCNIVCNTVKQPLELHTLSMSAEELQAVFLLLKTLMKSGAPLTSHQPIYHISPPETVRDNFSLLKQCLPLKKQSASQEALLMKQSLYFILMAIYQEGIDILNLFRFNYDEPKNQAITHLITQEPQKKWHLDDVAKALFTTPSTLRRHLNREGVSFRQLLLDVRMGMALNYLTFSNYSVFQISHRCGFGSNAYFCDVFKRKYNMTPSQFRLQSRQSNDPNFITNLSLRSNPIEFDKEIDE</sequence>
<accession>P32326</accession>
<comment type="function">
    <text>Positive regulator of the expression of the urease operon.</text>
</comment>
<dbReference type="EMBL" id="L12007">
    <property type="protein sequence ID" value="AAA24750.1"/>
    <property type="molecule type" value="Genomic_DNA"/>
</dbReference>
<dbReference type="PIR" id="A40593">
    <property type="entry name" value="A40593"/>
</dbReference>
<dbReference type="SMR" id="P32326"/>
<dbReference type="GO" id="GO:0005829">
    <property type="term" value="C:cytosol"/>
    <property type="evidence" value="ECO:0007669"/>
    <property type="project" value="TreeGrafter"/>
</dbReference>
<dbReference type="GO" id="GO:0003700">
    <property type="term" value="F:DNA-binding transcription factor activity"/>
    <property type="evidence" value="ECO:0007669"/>
    <property type="project" value="InterPro"/>
</dbReference>
<dbReference type="GO" id="GO:0000976">
    <property type="term" value="F:transcription cis-regulatory region binding"/>
    <property type="evidence" value="ECO:0007669"/>
    <property type="project" value="TreeGrafter"/>
</dbReference>
<dbReference type="Gene3D" id="1.10.10.60">
    <property type="entry name" value="Homeodomain-like"/>
    <property type="match status" value="1"/>
</dbReference>
<dbReference type="InterPro" id="IPR009057">
    <property type="entry name" value="Homeodomain-like_sf"/>
</dbReference>
<dbReference type="InterPro" id="IPR018060">
    <property type="entry name" value="HTH_AraC"/>
</dbReference>
<dbReference type="InterPro" id="IPR018062">
    <property type="entry name" value="HTH_AraC-typ_CS"/>
</dbReference>
<dbReference type="InterPro" id="IPR020449">
    <property type="entry name" value="Tscrpt_reg_AraC-type_HTH"/>
</dbReference>
<dbReference type="PANTHER" id="PTHR47894">
    <property type="entry name" value="HTH-TYPE TRANSCRIPTIONAL REGULATOR GADX"/>
    <property type="match status" value="1"/>
</dbReference>
<dbReference type="PANTHER" id="PTHR47894:SF4">
    <property type="entry name" value="HTH-TYPE TRANSCRIPTIONAL REGULATOR GADX"/>
    <property type="match status" value="1"/>
</dbReference>
<dbReference type="Pfam" id="PF12833">
    <property type="entry name" value="HTH_18"/>
    <property type="match status" value="1"/>
</dbReference>
<dbReference type="PRINTS" id="PR00032">
    <property type="entry name" value="HTHARAC"/>
</dbReference>
<dbReference type="SMART" id="SM00342">
    <property type="entry name" value="HTH_ARAC"/>
    <property type="match status" value="1"/>
</dbReference>
<dbReference type="SUPFAM" id="SSF46689">
    <property type="entry name" value="Homeodomain-like"/>
    <property type="match status" value="1"/>
</dbReference>
<dbReference type="PROSITE" id="PS00041">
    <property type="entry name" value="HTH_ARAC_FAMILY_1"/>
    <property type="match status" value="1"/>
</dbReference>
<dbReference type="PROSITE" id="PS01124">
    <property type="entry name" value="HTH_ARAC_FAMILY_2"/>
    <property type="match status" value="1"/>
</dbReference>
<gene>
    <name type="primary">ureR</name>
</gene>
<proteinExistence type="predicted"/>